<proteinExistence type="inferred from homology"/>
<protein>
    <recommendedName>
        <fullName evidence="1">Ribosomal RNA large subunit methyltransferase E</fullName>
        <ecNumber evidence="1">2.1.1.166</ecNumber>
    </recommendedName>
    <alternativeName>
        <fullName evidence="1">23S rRNA Um2552 methyltransferase</fullName>
    </alternativeName>
    <alternativeName>
        <fullName evidence="1">rRNA (uridine-2'-O-)-methyltransferase</fullName>
    </alternativeName>
</protein>
<evidence type="ECO:0000255" key="1">
    <source>
        <dbReference type="HAMAP-Rule" id="MF_01547"/>
    </source>
</evidence>
<feature type="chain" id="PRO_1000194983" description="Ribosomal RNA large subunit methyltransferase E">
    <location>
        <begin position="1"/>
        <end position="220"/>
    </location>
</feature>
<feature type="active site" description="Proton acceptor" evidence="1">
    <location>
        <position position="173"/>
    </location>
</feature>
<feature type="binding site" evidence="1">
    <location>
        <position position="60"/>
    </location>
    <ligand>
        <name>S-adenosyl-L-methionine</name>
        <dbReference type="ChEBI" id="CHEBI:59789"/>
    </ligand>
</feature>
<feature type="binding site" evidence="1">
    <location>
        <position position="62"/>
    </location>
    <ligand>
        <name>S-adenosyl-L-methionine</name>
        <dbReference type="ChEBI" id="CHEBI:59789"/>
    </ligand>
</feature>
<feature type="binding site" evidence="1">
    <location>
        <position position="92"/>
    </location>
    <ligand>
        <name>S-adenosyl-L-methionine</name>
        <dbReference type="ChEBI" id="CHEBI:59789"/>
    </ligand>
</feature>
<feature type="binding site" evidence="1">
    <location>
        <position position="108"/>
    </location>
    <ligand>
        <name>S-adenosyl-L-methionine</name>
        <dbReference type="ChEBI" id="CHEBI:59789"/>
    </ligand>
</feature>
<feature type="binding site" evidence="1">
    <location>
        <position position="133"/>
    </location>
    <ligand>
        <name>S-adenosyl-L-methionine</name>
        <dbReference type="ChEBI" id="CHEBI:59789"/>
    </ligand>
</feature>
<dbReference type="EC" id="2.1.1.166" evidence="1"/>
<dbReference type="EMBL" id="CP001052">
    <property type="protein sequence ID" value="ACD17257.1"/>
    <property type="molecule type" value="Genomic_DNA"/>
</dbReference>
<dbReference type="RefSeq" id="WP_012433843.1">
    <property type="nucleotide sequence ID" value="NC_010681.1"/>
</dbReference>
<dbReference type="SMR" id="B2SZR9"/>
<dbReference type="STRING" id="398527.Bphyt_2863"/>
<dbReference type="KEGG" id="bpy:Bphyt_2863"/>
<dbReference type="eggNOG" id="COG0293">
    <property type="taxonomic scope" value="Bacteria"/>
</dbReference>
<dbReference type="HOGENOM" id="CLU_009422_4_1_4"/>
<dbReference type="OrthoDB" id="9790080at2"/>
<dbReference type="Proteomes" id="UP000001739">
    <property type="component" value="Chromosome 1"/>
</dbReference>
<dbReference type="GO" id="GO:0005737">
    <property type="term" value="C:cytoplasm"/>
    <property type="evidence" value="ECO:0007669"/>
    <property type="project" value="UniProtKB-SubCell"/>
</dbReference>
<dbReference type="GO" id="GO:0008650">
    <property type="term" value="F:rRNA (uridine-2'-O-)-methyltransferase activity"/>
    <property type="evidence" value="ECO:0007669"/>
    <property type="project" value="UniProtKB-UniRule"/>
</dbReference>
<dbReference type="FunFam" id="3.40.50.150:FF:000005">
    <property type="entry name" value="Ribosomal RNA large subunit methyltransferase E"/>
    <property type="match status" value="1"/>
</dbReference>
<dbReference type="Gene3D" id="3.40.50.150">
    <property type="entry name" value="Vaccinia Virus protein VP39"/>
    <property type="match status" value="1"/>
</dbReference>
<dbReference type="HAMAP" id="MF_01547">
    <property type="entry name" value="RNA_methyltr_E"/>
    <property type="match status" value="1"/>
</dbReference>
<dbReference type="InterPro" id="IPR050082">
    <property type="entry name" value="RNA_methyltr_RlmE"/>
</dbReference>
<dbReference type="InterPro" id="IPR002877">
    <property type="entry name" value="RNA_MeTrfase_FtsJ_dom"/>
</dbReference>
<dbReference type="InterPro" id="IPR015507">
    <property type="entry name" value="rRNA-MeTfrase_E"/>
</dbReference>
<dbReference type="InterPro" id="IPR029063">
    <property type="entry name" value="SAM-dependent_MTases_sf"/>
</dbReference>
<dbReference type="PANTHER" id="PTHR10920">
    <property type="entry name" value="RIBOSOMAL RNA METHYLTRANSFERASE"/>
    <property type="match status" value="1"/>
</dbReference>
<dbReference type="PANTHER" id="PTHR10920:SF18">
    <property type="entry name" value="RRNA METHYLTRANSFERASE 2, MITOCHONDRIAL"/>
    <property type="match status" value="1"/>
</dbReference>
<dbReference type="Pfam" id="PF01728">
    <property type="entry name" value="FtsJ"/>
    <property type="match status" value="1"/>
</dbReference>
<dbReference type="PIRSF" id="PIRSF005461">
    <property type="entry name" value="23S_rRNA_mtase"/>
    <property type="match status" value="1"/>
</dbReference>
<dbReference type="SUPFAM" id="SSF53335">
    <property type="entry name" value="S-adenosyl-L-methionine-dependent methyltransferases"/>
    <property type="match status" value="1"/>
</dbReference>
<reference key="1">
    <citation type="journal article" date="2011" name="J. Bacteriol.">
        <title>Complete genome sequence of the plant growth-promoting endophyte Burkholderia phytofirmans strain PsJN.</title>
        <authorList>
            <person name="Weilharter A."/>
            <person name="Mitter B."/>
            <person name="Shin M.V."/>
            <person name="Chain P.S."/>
            <person name="Nowak J."/>
            <person name="Sessitsch A."/>
        </authorList>
    </citation>
    <scope>NUCLEOTIDE SEQUENCE [LARGE SCALE GENOMIC DNA]</scope>
    <source>
        <strain>DSM 17436 / LMG 22146 / PsJN</strain>
    </source>
</reference>
<name>RLME_PARPJ</name>
<gene>
    <name evidence="1" type="primary">rlmE</name>
    <name evidence="1" type="synonym">ftsJ</name>
    <name evidence="1" type="synonym">rrmJ</name>
    <name type="ordered locus">Bphyt_2863</name>
</gene>
<comment type="function">
    <text evidence="1">Specifically methylates the uridine in position 2552 of 23S rRNA at the 2'-O position of the ribose in the fully assembled 50S ribosomal subunit.</text>
</comment>
<comment type="catalytic activity">
    <reaction evidence="1">
        <text>uridine(2552) in 23S rRNA + S-adenosyl-L-methionine = 2'-O-methyluridine(2552) in 23S rRNA + S-adenosyl-L-homocysteine + H(+)</text>
        <dbReference type="Rhea" id="RHEA:42720"/>
        <dbReference type="Rhea" id="RHEA-COMP:10202"/>
        <dbReference type="Rhea" id="RHEA-COMP:10203"/>
        <dbReference type="ChEBI" id="CHEBI:15378"/>
        <dbReference type="ChEBI" id="CHEBI:57856"/>
        <dbReference type="ChEBI" id="CHEBI:59789"/>
        <dbReference type="ChEBI" id="CHEBI:65315"/>
        <dbReference type="ChEBI" id="CHEBI:74478"/>
        <dbReference type="EC" id="2.1.1.166"/>
    </reaction>
</comment>
<comment type="subcellular location">
    <subcellularLocation>
        <location evidence="1">Cytoplasm</location>
    </subcellularLocation>
</comment>
<comment type="similarity">
    <text evidence="1">Belongs to the class I-like SAM-binding methyltransferase superfamily. RNA methyltransferase RlmE family.</text>
</comment>
<accession>B2SZR9</accession>
<keyword id="KW-0963">Cytoplasm</keyword>
<keyword id="KW-0489">Methyltransferase</keyword>
<keyword id="KW-0698">rRNA processing</keyword>
<keyword id="KW-0949">S-adenosyl-L-methionine</keyword>
<keyword id="KW-0808">Transferase</keyword>
<organism>
    <name type="scientific">Paraburkholderia phytofirmans (strain DSM 17436 / LMG 22146 / PsJN)</name>
    <name type="common">Burkholderia phytofirmans</name>
    <dbReference type="NCBI Taxonomy" id="398527"/>
    <lineage>
        <taxon>Bacteria</taxon>
        <taxon>Pseudomonadati</taxon>
        <taxon>Pseudomonadota</taxon>
        <taxon>Betaproteobacteria</taxon>
        <taxon>Burkholderiales</taxon>
        <taxon>Burkholderiaceae</taxon>
        <taxon>Paraburkholderia</taxon>
    </lineage>
</organism>
<sequence>MAKNKFNTAWLHDHINDPYVKMAQREGYRARAAYKLKEIDEQDRLIRPGQVIVDLGSVPGSWSQYARNKLAKGAQRDAEREGGIDGTIIALDILPMEPIADVTFIQGDFREDTVLGQLEELVGERQVDLVISDMAPNLSGVAVADAARIEHLCDLALEFSQNHLKQDGALLVKCFHGSGYSQIVEKFKHQFKVVAARKPKASRDKSSETFILGKHLKRPA</sequence>